<evidence type="ECO:0000256" key="1">
    <source>
        <dbReference type="SAM" id="MobiDB-lite"/>
    </source>
</evidence>
<evidence type="ECO:0000305" key="2"/>
<accession>P93318</accession>
<protein>
    <recommendedName>
        <fullName>Uncharacterized mitochondrial protein AtMg00660</fullName>
    </recommendedName>
    <alternativeName>
        <fullName>ORF149</fullName>
    </alternativeName>
</protein>
<comment type="subcellular location">
    <subcellularLocation>
        <location evidence="2">Mitochondrion</location>
    </subcellularLocation>
</comment>
<organism>
    <name type="scientific">Arabidopsis thaliana</name>
    <name type="common">Mouse-ear cress</name>
    <dbReference type="NCBI Taxonomy" id="3702"/>
    <lineage>
        <taxon>Eukaryota</taxon>
        <taxon>Viridiplantae</taxon>
        <taxon>Streptophyta</taxon>
        <taxon>Embryophyta</taxon>
        <taxon>Tracheophyta</taxon>
        <taxon>Spermatophyta</taxon>
        <taxon>Magnoliopsida</taxon>
        <taxon>eudicotyledons</taxon>
        <taxon>Gunneridae</taxon>
        <taxon>Pentapetalae</taxon>
        <taxon>rosids</taxon>
        <taxon>malvids</taxon>
        <taxon>Brassicales</taxon>
        <taxon>Brassicaceae</taxon>
        <taxon>Camelineae</taxon>
        <taxon>Arabidopsis</taxon>
    </lineage>
</organism>
<proteinExistence type="predicted"/>
<dbReference type="EMBL" id="Y08501">
    <property type="protein sequence ID" value="CAA69750.1"/>
    <property type="molecule type" value="Genomic_DNA"/>
</dbReference>
<dbReference type="EMBL" id="BK010421">
    <property type="status" value="NOT_ANNOTATED_CDS"/>
    <property type="molecule type" value="Genomic_DNA"/>
</dbReference>
<dbReference type="RefSeq" id="NP_085526.1">
    <property type="nucleotide sequence ID" value="NC_001284.2"/>
</dbReference>
<dbReference type="STRING" id="3702.P93318"/>
<dbReference type="PaxDb" id="3702-ATMG00660.1"/>
<dbReference type="EnsemblPlants" id="ATMG00660.1">
    <property type="protein sequence ID" value="ATMG00660.1"/>
    <property type="gene ID" value="ATMG00660"/>
</dbReference>
<dbReference type="Gramene" id="ATMG00660.1">
    <property type="protein sequence ID" value="ATMG00660.1"/>
    <property type="gene ID" value="ATMG00660"/>
</dbReference>
<dbReference type="Araport" id="ATMG00660"/>
<dbReference type="TAIR" id="ATMG00660">
    <property type="gene designation" value="ORF149"/>
</dbReference>
<dbReference type="eggNOG" id="ENOG502S5KV">
    <property type="taxonomic scope" value="Eukaryota"/>
</dbReference>
<dbReference type="HOGENOM" id="CLU_148328_0_0_1"/>
<dbReference type="InParanoid" id="P93318"/>
<dbReference type="OMA" id="RNPIGSQ"/>
<dbReference type="PRO" id="PR:P93318"/>
<dbReference type="Proteomes" id="UP000006548">
    <property type="component" value="Mitochondrion MT"/>
</dbReference>
<dbReference type="GO" id="GO:0005739">
    <property type="term" value="C:mitochondrion"/>
    <property type="evidence" value="ECO:0007669"/>
    <property type="project" value="UniProtKB-SubCell"/>
</dbReference>
<dbReference type="PANTHER" id="PTHR48161">
    <property type="entry name" value="BNACNNG12870D PROTEIN"/>
    <property type="match status" value="1"/>
</dbReference>
<dbReference type="PANTHER" id="PTHR48161:SF2">
    <property type="entry name" value="ORF122B PROTEIN"/>
    <property type="match status" value="1"/>
</dbReference>
<keyword id="KW-0496">Mitochondrion</keyword>
<keyword id="KW-1185">Reference proteome</keyword>
<sequence length="149" mass="16699">MRPFGEAKFLSGHQTLQLMRKKALWSKGKRVRCHTPCLPKVPRGRARRSGATTREQSPHRQGDRRRPSQGTSRPTGKTGETREGNPIGSQRIHSTCSPTDFIFLILESGGKGSLFCNEKKKRSRFDSAQPNDTSNTNDLCLECVARSLF</sequence>
<reference key="1">
    <citation type="journal article" date="1997" name="Nat. Genet.">
        <title>The mitochondrial genome of Arabidopsis thaliana contains 57 genes in 366,924 nucleotides.</title>
        <authorList>
            <person name="Unseld M."/>
            <person name="Marienfeld J.R."/>
            <person name="Brandt P."/>
            <person name="Brennicke A."/>
        </authorList>
    </citation>
    <scope>NUCLEOTIDE SEQUENCE [LARGE SCALE GENOMIC DNA]</scope>
    <source>
        <strain>cv. C24</strain>
    </source>
</reference>
<reference key="2">
    <citation type="journal article" date="2018" name="Plant Cell">
        <title>Correction of persistent errors in Arabidopsis reference mitochondrial genomes.</title>
        <authorList>
            <person name="Sloan D.B."/>
            <person name="Wu Z."/>
            <person name="Sharbrough J."/>
        </authorList>
    </citation>
    <scope>NUCLEOTIDE SEQUENCE [LARGE SCALE GENOMIC DNA]</scope>
    <source>
        <strain>cv. Columbia</strain>
    </source>
</reference>
<name>M660_ARATH</name>
<gene>
    <name type="ordered locus">AtMg00660</name>
</gene>
<feature type="chain" id="PRO_0000196782" description="Uncharacterized mitochondrial protein AtMg00660">
    <location>
        <begin position="1"/>
        <end position="149"/>
    </location>
</feature>
<feature type="region of interest" description="Disordered" evidence="1">
    <location>
        <begin position="34"/>
        <end position="94"/>
    </location>
</feature>
<feature type="compositionally biased region" description="Basic and acidic residues" evidence="1">
    <location>
        <begin position="56"/>
        <end position="66"/>
    </location>
</feature>
<geneLocation type="mitochondrion"/>